<gene>
    <name evidence="2" type="primary">tuf1</name>
    <name type="ordered locus">WD_0017</name>
</gene>
<accession>Q73IX6</accession>
<protein>
    <recommendedName>
        <fullName evidence="2">Elongation factor Tu 1</fullName>
        <shortName evidence="2">EF-Tu 1</shortName>
        <ecNumber evidence="2">3.6.5.3</ecNumber>
    </recommendedName>
</protein>
<feature type="chain" id="PRO_0000337571" description="Elongation factor Tu 1">
    <location>
        <begin position="1"/>
        <end position="390"/>
    </location>
</feature>
<feature type="domain" description="tr-type G">
    <location>
        <begin position="10"/>
        <end position="201"/>
    </location>
</feature>
<feature type="region of interest" description="G1" evidence="1">
    <location>
        <begin position="19"/>
        <end position="26"/>
    </location>
</feature>
<feature type="region of interest" description="G2" evidence="1">
    <location>
        <begin position="55"/>
        <end position="59"/>
    </location>
</feature>
<feature type="region of interest" description="G3" evidence="1">
    <location>
        <begin position="76"/>
        <end position="79"/>
    </location>
</feature>
<feature type="region of interest" description="G4" evidence="1">
    <location>
        <begin position="131"/>
        <end position="134"/>
    </location>
</feature>
<feature type="region of interest" description="G5" evidence="1">
    <location>
        <begin position="168"/>
        <end position="170"/>
    </location>
</feature>
<feature type="binding site" evidence="2">
    <location>
        <begin position="19"/>
        <end position="26"/>
    </location>
    <ligand>
        <name>GTP</name>
        <dbReference type="ChEBI" id="CHEBI:37565"/>
    </ligand>
</feature>
<feature type="binding site" evidence="2">
    <location>
        <position position="26"/>
    </location>
    <ligand>
        <name>Mg(2+)</name>
        <dbReference type="ChEBI" id="CHEBI:18420"/>
    </ligand>
</feature>
<feature type="binding site" evidence="2">
    <location>
        <begin position="76"/>
        <end position="80"/>
    </location>
    <ligand>
        <name>GTP</name>
        <dbReference type="ChEBI" id="CHEBI:37565"/>
    </ligand>
</feature>
<feature type="binding site" evidence="2">
    <location>
        <begin position="131"/>
        <end position="134"/>
    </location>
    <ligand>
        <name>GTP</name>
        <dbReference type="ChEBI" id="CHEBI:37565"/>
    </ligand>
</feature>
<sequence length="390" mass="42640">MTAVVEAFGKPHVNVGTIGHVDHGKTTLTAAITKHYGNFVAYDQIDKAPEERKRGITIATAHVEYQTEKRHYAHVDCPGHADYVKNMIVGAAQMDAAILVVSGVDGPMPQTREHILLAKQVGVGYIVVYINKADVADADMIDLVEMEVRELLSKYGFPGDEVPVVVGSALKALEDDSSEYGKKSIDKLMEKLDEYVAVPPRPVDLPFLLPIEDVFSISGRGTVVTGRIEKGEIKTGEEIEIIGLKATQKTICTGVEMFKKLLDKGSAGLNVGILLRGTKREEVERGQVLAKPGTITPHRKFKAEVYILKKEEGGRHTPFFANYQPQFYLRTTDVTGSIKLLDGKEMVMPGDNVSVEVELQVPIAMDKGLRFAIREGGRTVGSGVVSEILE</sequence>
<organism>
    <name type="scientific">Wolbachia pipientis wMel</name>
    <dbReference type="NCBI Taxonomy" id="163164"/>
    <lineage>
        <taxon>Bacteria</taxon>
        <taxon>Pseudomonadati</taxon>
        <taxon>Pseudomonadota</taxon>
        <taxon>Alphaproteobacteria</taxon>
        <taxon>Rickettsiales</taxon>
        <taxon>Anaplasmataceae</taxon>
        <taxon>Wolbachieae</taxon>
        <taxon>Wolbachia</taxon>
    </lineage>
</organism>
<evidence type="ECO:0000250" key="1"/>
<evidence type="ECO:0000255" key="2">
    <source>
        <dbReference type="HAMAP-Rule" id="MF_00118"/>
    </source>
</evidence>
<keyword id="KW-0963">Cytoplasm</keyword>
<keyword id="KW-0251">Elongation factor</keyword>
<keyword id="KW-0342">GTP-binding</keyword>
<keyword id="KW-0378">Hydrolase</keyword>
<keyword id="KW-0460">Magnesium</keyword>
<keyword id="KW-0479">Metal-binding</keyword>
<keyword id="KW-0547">Nucleotide-binding</keyword>
<keyword id="KW-0648">Protein biosynthesis</keyword>
<dbReference type="EC" id="3.6.5.3" evidence="2"/>
<dbReference type="EMBL" id="AE017196">
    <property type="protein sequence ID" value="AAS13784.1"/>
    <property type="molecule type" value="Genomic_DNA"/>
</dbReference>
<dbReference type="SMR" id="Q73IX6"/>
<dbReference type="EnsemblBacteria" id="AAS13784">
    <property type="protein sequence ID" value="AAS13784"/>
    <property type="gene ID" value="WD_0017"/>
</dbReference>
<dbReference type="KEGG" id="wol:WD_0017"/>
<dbReference type="eggNOG" id="COG0050">
    <property type="taxonomic scope" value="Bacteria"/>
</dbReference>
<dbReference type="Proteomes" id="UP000008215">
    <property type="component" value="Chromosome"/>
</dbReference>
<dbReference type="GO" id="GO:0005737">
    <property type="term" value="C:cytoplasm"/>
    <property type="evidence" value="ECO:0007669"/>
    <property type="project" value="UniProtKB-SubCell"/>
</dbReference>
<dbReference type="GO" id="GO:0005525">
    <property type="term" value="F:GTP binding"/>
    <property type="evidence" value="ECO:0007669"/>
    <property type="project" value="UniProtKB-UniRule"/>
</dbReference>
<dbReference type="GO" id="GO:0003924">
    <property type="term" value="F:GTPase activity"/>
    <property type="evidence" value="ECO:0007669"/>
    <property type="project" value="InterPro"/>
</dbReference>
<dbReference type="GO" id="GO:0097216">
    <property type="term" value="F:guanosine tetraphosphate binding"/>
    <property type="evidence" value="ECO:0007669"/>
    <property type="project" value="UniProtKB-ARBA"/>
</dbReference>
<dbReference type="GO" id="GO:0003746">
    <property type="term" value="F:translation elongation factor activity"/>
    <property type="evidence" value="ECO:0007669"/>
    <property type="project" value="UniProtKB-UniRule"/>
</dbReference>
<dbReference type="CDD" id="cd01884">
    <property type="entry name" value="EF_Tu"/>
    <property type="match status" value="1"/>
</dbReference>
<dbReference type="CDD" id="cd03697">
    <property type="entry name" value="EFTU_II"/>
    <property type="match status" value="1"/>
</dbReference>
<dbReference type="CDD" id="cd03707">
    <property type="entry name" value="EFTU_III"/>
    <property type="match status" value="1"/>
</dbReference>
<dbReference type="FunFam" id="2.40.30.10:FF:000001">
    <property type="entry name" value="Elongation factor Tu"/>
    <property type="match status" value="1"/>
</dbReference>
<dbReference type="FunFam" id="3.40.50.300:FF:000003">
    <property type="entry name" value="Elongation factor Tu"/>
    <property type="match status" value="1"/>
</dbReference>
<dbReference type="Gene3D" id="3.40.50.300">
    <property type="entry name" value="P-loop containing nucleotide triphosphate hydrolases"/>
    <property type="match status" value="1"/>
</dbReference>
<dbReference type="Gene3D" id="2.40.30.10">
    <property type="entry name" value="Translation factors"/>
    <property type="match status" value="2"/>
</dbReference>
<dbReference type="HAMAP" id="MF_00118_B">
    <property type="entry name" value="EF_Tu_B"/>
    <property type="match status" value="1"/>
</dbReference>
<dbReference type="InterPro" id="IPR041709">
    <property type="entry name" value="EF-Tu_GTP-bd"/>
</dbReference>
<dbReference type="InterPro" id="IPR050055">
    <property type="entry name" value="EF-Tu_GTPase"/>
</dbReference>
<dbReference type="InterPro" id="IPR004161">
    <property type="entry name" value="EFTu-like_2"/>
</dbReference>
<dbReference type="InterPro" id="IPR033720">
    <property type="entry name" value="EFTU_2"/>
</dbReference>
<dbReference type="InterPro" id="IPR031157">
    <property type="entry name" value="G_TR_CS"/>
</dbReference>
<dbReference type="InterPro" id="IPR027417">
    <property type="entry name" value="P-loop_NTPase"/>
</dbReference>
<dbReference type="InterPro" id="IPR005225">
    <property type="entry name" value="Small_GTP-bd"/>
</dbReference>
<dbReference type="InterPro" id="IPR000795">
    <property type="entry name" value="T_Tr_GTP-bd_dom"/>
</dbReference>
<dbReference type="InterPro" id="IPR009000">
    <property type="entry name" value="Transl_B-barrel_sf"/>
</dbReference>
<dbReference type="InterPro" id="IPR009001">
    <property type="entry name" value="Transl_elong_EF1A/Init_IF2_C"/>
</dbReference>
<dbReference type="InterPro" id="IPR004541">
    <property type="entry name" value="Transl_elong_EFTu/EF1A_bac/org"/>
</dbReference>
<dbReference type="InterPro" id="IPR004160">
    <property type="entry name" value="Transl_elong_EFTu/EF1A_C"/>
</dbReference>
<dbReference type="NCBIfam" id="TIGR00485">
    <property type="entry name" value="EF-Tu"/>
    <property type="match status" value="1"/>
</dbReference>
<dbReference type="NCBIfam" id="NF000766">
    <property type="entry name" value="PRK00049.1"/>
    <property type="match status" value="1"/>
</dbReference>
<dbReference type="NCBIfam" id="NF009372">
    <property type="entry name" value="PRK12735.1"/>
    <property type="match status" value="1"/>
</dbReference>
<dbReference type="NCBIfam" id="NF009373">
    <property type="entry name" value="PRK12736.1"/>
    <property type="match status" value="1"/>
</dbReference>
<dbReference type="NCBIfam" id="TIGR00231">
    <property type="entry name" value="small_GTP"/>
    <property type="match status" value="1"/>
</dbReference>
<dbReference type="PANTHER" id="PTHR43721:SF22">
    <property type="entry name" value="ELONGATION FACTOR TU, MITOCHONDRIAL"/>
    <property type="match status" value="1"/>
</dbReference>
<dbReference type="PANTHER" id="PTHR43721">
    <property type="entry name" value="ELONGATION FACTOR TU-RELATED"/>
    <property type="match status" value="1"/>
</dbReference>
<dbReference type="Pfam" id="PF00009">
    <property type="entry name" value="GTP_EFTU"/>
    <property type="match status" value="1"/>
</dbReference>
<dbReference type="Pfam" id="PF03144">
    <property type="entry name" value="GTP_EFTU_D2"/>
    <property type="match status" value="1"/>
</dbReference>
<dbReference type="Pfam" id="PF03143">
    <property type="entry name" value="GTP_EFTU_D3"/>
    <property type="match status" value="1"/>
</dbReference>
<dbReference type="PRINTS" id="PR00315">
    <property type="entry name" value="ELONGATNFCT"/>
</dbReference>
<dbReference type="SUPFAM" id="SSF50465">
    <property type="entry name" value="EF-Tu/eEF-1alpha/eIF2-gamma C-terminal domain"/>
    <property type="match status" value="1"/>
</dbReference>
<dbReference type="SUPFAM" id="SSF52540">
    <property type="entry name" value="P-loop containing nucleoside triphosphate hydrolases"/>
    <property type="match status" value="1"/>
</dbReference>
<dbReference type="SUPFAM" id="SSF50447">
    <property type="entry name" value="Translation proteins"/>
    <property type="match status" value="1"/>
</dbReference>
<dbReference type="PROSITE" id="PS00301">
    <property type="entry name" value="G_TR_1"/>
    <property type="match status" value="1"/>
</dbReference>
<dbReference type="PROSITE" id="PS51722">
    <property type="entry name" value="G_TR_2"/>
    <property type="match status" value="1"/>
</dbReference>
<name>EFTU1_WOLPM</name>
<proteinExistence type="inferred from homology"/>
<reference key="1">
    <citation type="journal article" date="2004" name="PLoS Biol.">
        <title>Phylogenomics of the reproductive parasite Wolbachia pipientis wMel: a streamlined genome overrun by mobile genetic elements.</title>
        <authorList>
            <person name="Wu M."/>
            <person name="Sun L.V."/>
            <person name="Vamathevan J.J."/>
            <person name="Riegler M."/>
            <person name="DeBoy R.T."/>
            <person name="Brownlie J.C."/>
            <person name="McGraw E.A."/>
            <person name="Martin W."/>
            <person name="Esser C."/>
            <person name="Ahmadinejad N."/>
            <person name="Wiegand C."/>
            <person name="Madupu R."/>
            <person name="Beanan M.J."/>
            <person name="Brinkac L.M."/>
            <person name="Daugherty S.C."/>
            <person name="Durkin A.S."/>
            <person name="Kolonay J.F."/>
            <person name="Nelson W.C."/>
            <person name="Mohamoud Y."/>
            <person name="Lee P."/>
            <person name="Berry K.J."/>
            <person name="Young M.B."/>
            <person name="Utterback T.R."/>
            <person name="Weidman J.F."/>
            <person name="Nierman W.C."/>
            <person name="Paulsen I.T."/>
            <person name="Nelson K.E."/>
            <person name="Tettelin H."/>
            <person name="O'Neill S.L."/>
            <person name="Eisen J.A."/>
        </authorList>
    </citation>
    <scope>NUCLEOTIDE SEQUENCE [LARGE SCALE GENOMIC DNA]</scope>
</reference>
<comment type="function">
    <text evidence="2">GTP hydrolase that promotes the GTP-dependent binding of aminoacyl-tRNA to the A-site of ribosomes during protein biosynthesis.</text>
</comment>
<comment type="catalytic activity">
    <reaction evidence="2">
        <text>GTP + H2O = GDP + phosphate + H(+)</text>
        <dbReference type="Rhea" id="RHEA:19669"/>
        <dbReference type="ChEBI" id="CHEBI:15377"/>
        <dbReference type="ChEBI" id="CHEBI:15378"/>
        <dbReference type="ChEBI" id="CHEBI:37565"/>
        <dbReference type="ChEBI" id="CHEBI:43474"/>
        <dbReference type="ChEBI" id="CHEBI:58189"/>
        <dbReference type="EC" id="3.6.5.3"/>
    </reaction>
    <physiologicalReaction direction="left-to-right" evidence="2">
        <dbReference type="Rhea" id="RHEA:19670"/>
    </physiologicalReaction>
</comment>
<comment type="subunit">
    <text evidence="2">Monomer.</text>
</comment>
<comment type="subcellular location">
    <subcellularLocation>
        <location evidence="2">Cytoplasm</location>
    </subcellularLocation>
</comment>
<comment type="similarity">
    <text evidence="2">Belongs to the TRAFAC class translation factor GTPase superfamily. Classic translation factor GTPase family. EF-Tu/EF-1A subfamily.</text>
</comment>